<feature type="chain" id="PRO_0000113030" description="Ornithine carbamoyltransferase">
    <location>
        <begin position="1"/>
        <end position="335"/>
    </location>
</feature>
<feature type="binding site" evidence="2">
    <location>
        <begin position="60"/>
        <end position="63"/>
    </location>
    <ligand>
        <name>carbamoyl phosphate</name>
        <dbReference type="ChEBI" id="CHEBI:58228"/>
    </ligand>
</feature>
<feature type="binding site" evidence="2">
    <location>
        <position position="87"/>
    </location>
    <ligand>
        <name>carbamoyl phosphate</name>
        <dbReference type="ChEBI" id="CHEBI:58228"/>
    </ligand>
</feature>
<feature type="binding site" evidence="2">
    <location>
        <position position="111"/>
    </location>
    <ligand>
        <name>carbamoyl phosphate</name>
        <dbReference type="ChEBI" id="CHEBI:58228"/>
    </ligand>
</feature>
<feature type="binding site" evidence="2">
    <location>
        <begin position="138"/>
        <end position="141"/>
    </location>
    <ligand>
        <name>carbamoyl phosphate</name>
        <dbReference type="ChEBI" id="CHEBI:58228"/>
    </ligand>
</feature>
<feature type="binding site" evidence="2">
    <location>
        <position position="171"/>
    </location>
    <ligand>
        <name>L-ornithine</name>
        <dbReference type="ChEBI" id="CHEBI:46911"/>
    </ligand>
</feature>
<feature type="binding site" evidence="2">
    <location>
        <position position="235"/>
    </location>
    <ligand>
        <name>L-ornithine</name>
        <dbReference type="ChEBI" id="CHEBI:46911"/>
    </ligand>
</feature>
<feature type="binding site" evidence="2">
    <location>
        <begin position="239"/>
        <end position="240"/>
    </location>
    <ligand>
        <name>L-ornithine</name>
        <dbReference type="ChEBI" id="CHEBI:46911"/>
    </ligand>
</feature>
<feature type="binding site" evidence="2">
    <location>
        <begin position="277"/>
        <end position="278"/>
    </location>
    <ligand>
        <name>carbamoyl phosphate</name>
        <dbReference type="ChEBI" id="CHEBI:58228"/>
    </ligand>
</feature>
<feature type="binding site" evidence="2">
    <location>
        <position position="322"/>
    </location>
    <ligand>
        <name>carbamoyl phosphate</name>
        <dbReference type="ChEBI" id="CHEBI:58228"/>
    </ligand>
</feature>
<sequence>MATVPTALAGRHFLKELDFTAEEFRGLLELAAELKAAKKARTETLYLRGRNIALVFEKTSTRTRCAFEVAAADQGASTTYLDPAGSQIGHKESVKDTARVLGRMFDGIEYRGHGQGVVEELAAHAGVPVYNGLTDEWHPTQMLADALTMTEHSDKPLTEIAYAYLGDARYNMGNSYLVTGALLGMDVRIVAPRLLWPDETIVEVAQQLAVASGARITLTEDVKEGVRGADFVATDVWVSMGEPKEVWDERIGLLGPYAVTMDVLRATGNDDVKFLHCLPAFHDLGTDIGREIHARHGLTSLEVTDEVFESAHSVVFDEAENRMHTIKAVLVATLA</sequence>
<protein>
    <recommendedName>
        <fullName evidence="2">Ornithine carbamoyltransferase</fullName>
        <shortName evidence="2">OTCase</shortName>
        <ecNumber evidence="2">2.1.3.3</ecNumber>
    </recommendedName>
</protein>
<evidence type="ECO:0000250" key="1"/>
<evidence type="ECO:0000255" key="2">
    <source>
        <dbReference type="HAMAP-Rule" id="MF_01109"/>
    </source>
</evidence>
<dbReference type="EC" id="2.1.3.3" evidence="2"/>
<dbReference type="EMBL" id="BA000030">
    <property type="protein sequence ID" value="BAC70030.1"/>
    <property type="molecule type" value="Genomic_DNA"/>
</dbReference>
<dbReference type="RefSeq" id="WP_010983757.1">
    <property type="nucleotide sequence ID" value="NZ_JZJK01000086.1"/>
</dbReference>
<dbReference type="SMR" id="Q82KQ4"/>
<dbReference type="GeneID" id="41539411"/>
<dbReference type="KEGG" id="sma:SAVERM_2319"/>
<dbReference type="eggNOG" id="COG0078">
    <property type="taxonomic scope" value="Bacteria"/>
</dbReference>
<dbReference type="HOGENOM" id="CLU_043846_3_1_11"/>
<dbReference type="OrthoDB" id="9802587at2"/>
<dbReference type="UniPathway" id="UPA00068">
    <property type="reaction ID" value="UER00112"/>
</dbReference>
<dbReference type="Proteomes" id="UP000000428">
    <property type="component" value="Chromosome"/>
</dbReference>
<dbReference type="GO" id="GO:0005737">
    <property type="term" value="C:cytoplasm"/>
    <property type="evidence" value="ECO:0007669"/>
    <property type="project" value="UniProtKB-SubCell"/>
</dbReference>
<dbReference type="GO" id="GO:0016597">
    <property type="term" value="F:amino acid binding"/>
    <property type="evidence" value="ECO:0007669"/>
    <property type="project" value="InterPro"/>
</dbReference>
<dbReference type="GO" id="GO:0004585">
    <property type="term" value="F:ornithine carbamoyltransferase activity"/>
    <property type="evidence" value="ECO:0007669"/>
    <property type="project" value="UniProtKB-UniRule"/>
</dbReference>
<dbReference type="GO" id="GO:0042450">
    <property type="term" value="P:arginine biosynthetic process via ornithine"/>
    <property type="evidence" value="ECO:0007669"/>
    <property type="project" value="TreeGrafter"/>
</dbReference>
<dbReference type="GO" id="GO:0019240">
    <property type="term" value="P:citrulline biosynthetic process"/>
    <property type="evidence" value="ECO:0007669"/>
    <property type="project" value="TreeGrafter"/>
</dbReference>
<dbReference type="GO" id="GO:0006526">
    <property type="term" value="P:L-arginine biosynthetic process"/>
    <property type="evidence" value="ECO:0007669"/>
    <property type="project" value="UniProtKB-UniRule"/>
</dbReference>
<dbReference type="FunFam" id="3.40.50.1370:FF:000004">
    <property type="entry name" value="Ornithine carbamoyltransferase"/>
    <property type="match status" value="1"/>
</dbReference>
<dbReference type="Gene3D" id="3.40.50.1370">
    <property type="entry name" value="Aspartate/ornithine carbamoyltransferase"/>
    <property type="match status" value="2"/>
</dbReference>
<dbReference type="HAMAP" id="MF_01109">
    <property type="entry name" value="OTCase"/>
    <property type="match status" value="1"/>
</dbReference>
<dbReference type="InterPro" id="IPR006132">
    <property type="entry name" value="Asp/Orn_carbamoyltranf_P-bd"/>
</dbReference>
<dbReference type="InterPro" id="IPR006130">
    <property type="entry name" value="Asp/Orn_carbamoylTrfase"/>
</dbReference>
<dbReference type="InterPro" id="IPR036901">
    <property type="entry name" value="Asp/Orn_carbamoylTrfase_sf"/>
</dbReference>
<dbReference type="InterPro" id="IPR006131">
    <property type="entry name" value="Asp_carbamoyltransf_Asp/Orn-bd"/>
</dbReference>
<dbReference type="InterPro" id="IPR002292">
    <property type="entry name" value="Orn/put_carbamltrans"/>
</dbReference>
<dbReference type="InterPro" id="IPR024904">
    <property type="entry name" value="OTCase_ArgI"/>
</dbReference>
<dbReference type="NCBIfam" id="TIGR00658">
    <property type="entry name" value="orni_carb_tr"/>
    <property type="match status" value="1"/>
</dbReference>
<dbReference type="NCBIfam" id="NF001986">
    <property type="entry name" value="PRK00779.1"/>
    <property type="match status" value="1"/>
</dbReference>
<dbReference type="PANTHER" id="PTHR45753:SF2">
    <property type="entry name" value="ORNITHINE CARBAMOYLTRANSFERASE"/>
    <property type="match status" value="1"/>
</dbReference>
<dbReference type="PANTHER" id="PTHR45753">
    <property type="entry name" value="ORNITHINE CARBAMOYLTRANSFERASE, MITOCHONDRIAL"/>
    <property type="match status" value="1"/>
</dbReference>
<dbReference type="Pfam" id="PF00185">
    <property type="entry name" value="OTCace"/>
    <property type="match status" value="1"/>
</dbReference>
<dbReference type="Pfam" id="PF02729">
    <property type="entry name" value="OTCace_N"/>
    <property type="match status" value="1"/>
</dbReference>
<dbReference type="PRINTS" id="PR00100">
    <property type="entry name" value="AOTCASE"/>
</dbReference>
<dbReference type="PRINTS" id="PR00102">
    <property type="entry name" value="OTCASE"/>
</dbReference>
<dbReference type="SUPFAM" id="SSF53671">
    <property type="entry name" value="Aspartate/ornithine carbamoyltransferase"/>
    <property type="match status" value="1"/>
</dbReference>
<dbReference type="PROSITE" id="PS00097">
    <property type="entry name" value="CARBAMOYLTRANSFERASE"/>
    <property type="match status" value="1"/>
</dbReference>
<proteinExistence type="inferred from homology"/>
<organism>
    <name type="scientific">Streptomyces avermitilis (strain ATCC 31267 / DSM 46492 / JCM 5070 / NBRC 14893 / NCIMB 12804 / NRRL 8165 / MA-4680)</name>
    <dbReference type="NCBI Taxonomy" id="227882"/>
    <lineage>
        <taxon>Bacteria</taxon>
        <taxon>Bacillati</taxon>
        <taxon>Actinomycetota</taxon>
        <taxon>Actinomycetes</taxon>
        <taxon>Kitasatosporales</taxon>
        <taxon>Streptomycetaceae</taxon>
        <taxon>Streptomyces</taxon>
    </lineage>
</organism>
<accession>Q82KQ4</accession>
<gene>
    <name evidence="2" type="primary">argF</name>
    <name type="synonym">arcB1</name>
    <name type="ordered locus">SAV_2319</name>
</gene>
<comment type="function">
    <text evidence="1">Reversibly catalyzes the transfer of the carbamoyl group from carbamoyl phosphate (CP) to the N(epsilon) atom of ornithine (ORN) to produce L-citrulline.</text>
</comment>
<comment type="catalytic activity">
    <reaction evidence="2">
        <text>carbamoyl phosphate + L-ornithine = L-citrulline + phosphate + H(+)</text>
        <dbReference type="Rhea" id="RHEA:19513"/>
        <dbReference type="ChEBI" id="CHEBI:15378"/>
        <dbReference type="ChEBI" id="CHEBI:43474"/>
        <dbReference type="ChEBI" id="CHEBI:46911"/>
        <dbReference type="ChEBI" id="CHEBI:57743"/>
        <dbReference type="ChEBI" id="CHEBI:58228"/>
        <dbReference type="EC" id="2.1.3.3"/>
    </reaction>
</comment>
<comment type="pathway">
    <text evidence="2">Amino-acid biosynthesis; L-arginine biosynthesis; L-arginine from L-ornithine and carbamoyl phosphate: step 1/3.</text>
</comment>
<comment type="subcellular location">
    <subcellularLocation>
        <location evidence="2">Cytoplasm</location>
    </subcellularLocation>
</comment>
<comment type="similarity">
    <text evidence="2">Belongs to the aspartate/ornithine carbamoyltransferase superfamily. OTCase family.</text>
</comment>
<keyword id="KW-0028">Amino-acid biosynthesis</keyword>
<keyword id="KW-0055">Arginine biosynthesis</keyword>
<keyword id="KW-0963">Cytoplasm</keyword>
<keyword id="KW-1185">Reference proteome</keyword>
<keyword id="KW-0808">Transferase</keyword>
<reference key="1">
    <citation type="journal article" date="2001" name="Proc. Natl. Acad. Sci. U.S.A.">
        <title>Genome sequence of an industrial microorganism Streptomyces avermitilis: deducing the ability of producing secondary metabolites.</title>
        <authorList>
            <person name="Omura S."/>
            <person name="Ikeda H."/>
            <person name="Ishikawa J."/>
            <person name="Hanamoto A."/>
            <person name="Takahashi C."/>
            <person name="Shinose M."/>
            <person name="Takahashi Y."/>
            <person name="Horikawa H."/>
            <person name="Nakazawa H."/>
            <person name="Osonoe T."/>
            <person name="Kikuchi H."/>
            <person name="Shiba T."/>
            <person name="Sakaki Y."/>
            <person name="Hattori M."/>
        </authorList>
    </citation>
    <scope>NUCLEOTIDE SEQUENCE [LARGE SCALE GENOMIC DNA]</scope>
    <source>
        <strain>ATCC 31267 / DSM 46492 / JCM 5070 / NBRC 14893 / NCIMB 12804 / NRRL 8165 / MA-4680</strain>
    </source>
</reference>
<reference key="2">
    <citation type="journal article" date="2003" name="Nat. Biotechnol.">
        <title>Complete genome sequence and comparative analysis of the industrial microorganism Streptomyces avermitilis.</title>
        <authorList>
            <person name="Ikeda H."/>
            <person name="Ishikawa J."/>
            <person name="Hanamoto A."/>
            <person name="Shinose M."/>
            <person name="Kikuchi H."/>
            <person name="Shiba T."/>
            <person name="Sakaki Y."/>
            <person name="Hattori M."/>
            <person name="Omura S."/>
        </authorList>
    </citation>
    <scope>NUCLEOTIDE SEQUENCE [LARGE SCALE GENOMIC DNA]</scope>
    <source>
        <strain>ATCC 31267 / DSM 46492 / JCM 5070 / NBRC 14893 / NCIMB 12804 / NRRL 8165 / MA-4680</strain>
    </source>
</reference>
<name>OTC_STRAW</name>